<dbReference type="EC" id="3.1.1.29" evidence="1"/>
<dbReference type="EMBL" id="CP000469">
    <property type="protein sequence ID" value="ABK47246.1"/>
    <property type="molecule type" value="Genomic_DNA"/>
</dbReference>
<dbReference type="RefSeq" id="WP_011716128.1">
    <property type="nucleotide sequence ID" value="NC_008577.1"/>
</dbReference>
<dbReference type="SMR" id="A0KTX7"/>
<dbReference type="STRING" id="94122.Shewana3_1011"/>
<dbReference type="KEGG" id="shn:Shewana3_1011"/>
<dbReference type="eggNOG" id="COG0193">
    <property type="taxonomic scope" value="Bacteria"/>
</dbReference>
<dbReference type="HOGENOM" id="CLU_062456_3_1_6"/>
<dbReference type="OrthoDB" id="9800507at2"/>
<dbReference type="Proteomes" id="UP000002589">
    <property type="component" value="Chromosome"/>
</dbReference>
<dbReference type="GO" id="GO:0005737">
    <property type="term" value="C:cytoplasm"/>
    <property type="evidence" value="ECO:0007669"/>
    <property type="project" value="UniProtKB-SubCell"/>
</dbReference>
<dbReference type="GO" id="GO:0004045">
    <property type="term" value="F:peptidyl-tRNA hydrolase activity"/>
    <property type="evidence" value="ECO:0007669"/>
    <property type="project" value="UniProtKB-UniRule"/>
</dbReference>
<dbReference type="GO" id="GO:0000049">
    <property type="term" value="F:tRNA binding"/>
    <property type="evidence" value="ECO:0007669"/>
    <property type="project" value="UniProtKB-UniRule"/>
</dbReference>
<dbReference type="GO" id="GO:0006515">
    <property type="term" value="P:protein quality control for misfolded or incompletely synthesized proteins"/>
    <property type="evidence" value="ECO:0007669"/>
    <property type="project" value="UniProtKB-UniRule"/>
</dbReference>
<dbReference type="GO" id="GO:0072344">
    <property type="term" value="P:rescue of stalled ribosome"/>
    <property type="evidence" value="ECO:0007669"/>
    <property type="project" value="UniProtKB-UniRule"/>
</dbReference>
<dbReference type="CDD" id="cd00462">
    <property type="entry name" value="PTH"/>
    <property type="match status" value="1"/>
</dbReference>
<dbReference type="FunFam" id="3.40.50.1470:FF:000001">
    <property type="entry name" value="Peptidyl-tRNA hydrolase"/>
    <property type="match status" value="1"/>
</dbReference>
<dbReference type="Gene3D" id="3.40.50.1470">
    <property type="entry name" value="Peptidyl-tRNA hydrolase"/>
    <property type="match status" value="1"/>
</dbReference>
<dbReference type="HAMAP" id="MF_00083">
    <property type="entry name" value="Pept_tRNA_hydro_bact"/>
    <property type="match status" value="1"/>
</dbReference>
<dbReference type="InterPro" id="IPR001328">
    <property type="entry name" value="Pept_tRNA_hydro"/>
</dbReference>
<dbReference type="InterPro" id="IPR018171">
    <property type="entry name" value="Pept_tRNA_hydro_CS"/>
</dbReference>
<dbReference type="InterPro" id="IPR036416">
    <property type="entry name" value="Pept_tRNA_hydro_sf"/>
</dbReference>
<dbReference type="NCBIfam" id="TIGR00447">
    <property type="entry name" value="pth"/>
    <property type="match status" value="1"/>
</dbReference>
<dbReference type="PANTHER" id="PTHR17224">
    <property type="entry name" value="PEPTIDYL-TRNA HYDROLASE"/>
    <property type="match status" value="1"/>
</dbReference>
<dbReference type="PANTHER" id="PTHR17224:SF1">
    <property type="entry name" value="PEPTIDYL-TRNA HYDROLASE"/>
    <property type="match status" value="1"/>
</dbReference>
<dbReference type="Pfam" id="PF01195">
    <property type="entry name" value="Pept_tRNA_hydro"/>
    <property type="match status" value="1"/>
</dbReference>
<dbReference type="SUPFAM" id="SSF53178">
    <property type="entry name" value="Peptidyl-tRNA hydrolase-like"/>
    <property type="match status" value="1"/>
</dbReference>
<dbReference type="PROSITE" id="PS01195">
    <property type="entry name" value="PEPT_TRNA_HYDROL_1"/>
    <property type="match status" value="1"/>
</dbReference>
<dbReference type="PROSITE" id="PS01196">
    <property type="entry name" value="PEPT_TRNA_HYDROL_2"/>
    <property type="match status" value="1"/>
</dbReference>
<gene>
    <name evidence="1" type="primary">pth</name>
    <name type="ordered locus">Shewana3_1011</name>
</gene>
<evidence type="ECO:0000255" key="1">
    <source>
        <dbReference type="HAMAP-Rule" id="MF_00083"/>
    </source>
</evidence>
<sequence>MGEIKLIVGLANPGAEYAQTRHNAGAWYVEELARICGVSLVPDSKYFGLTARAVLHGKDVRLLIPTTYMNLSGKAVGALANFFRITPEEILVAHDELDMPPGVAKFKLGGGHGGHNGLKDIIAKLANDKNFYRLRIGIGHPGDKNKVSGYVLGKAPAKEQELINAAVDEAVRSTEVLFKEDMVKAMTRLHSFKAE</sequence>
<protein>
    <recommendedName>
        <fullName evidence="1">Peptidyl-tRNA hydrolase</fullName>
        <shortName evidence="1">Pth</shortName>
        <ecNumber evidence="1">3.1.1.29</ecNumber>
    </recommendedName>
</protein>
<proteinExistence type="inferred from homology"/>
<name>PTH_SHESA</name>
<keyword id="KW-0963">Cytoplasm</keyword>
<keyword id="KW-0378">Hydrolase</keyword>
<keyword id="KW-0694">RNA-binding</keyword>
<keyword id="KW-0820">tRNA-binding</keyword>
<comment type="function">
    <text evidence="1">Hydrolyzes ribosome-free peptidyl-tRNAs (with 1 or more amino acids incorporated), which drop off the ribosome during protein synthesis, or as a result of ribosome stalling.</text>
</comment>
<comment type="function">
    <text evidence="1">Catalyzes the release of premature peptidyl moieties from peptidyl-tRNA molecules trapped in stalled 50S ribosomal subunits, and thus maintains levels of free tRNAs and 50S ribosomes.</text>
</comment>
<comment type="catalytic activity">
    <reaction evidence="1">
        <text>an N-acyl-L-alpha-aminoacyl-tRNA + H2O = an N-acyl-L-amino acid + a tRNA + H(+)</text>
        <dbReference type="Rhea" id="RHEA:54448"/>
        <dbReference type="Rhea" id="RHEA-COMP:10123"/>
        <dbReference type="Rhea" id="RHEA-COMP:13883"/>
        <dbReference type="ChEBI" id="CHEBI:15377"/>
        <dbReference type="ChEBI" id="CHEBI:15378"/>
        <dbReference type="ChEBI" id="CHEBI:59874"/>
        <dbReference type="ChEBI" id="CHEBI:78442"/>
        <dbReference type="ChEBI" id="CHEBI:138191"/>
        <dbReference type="EC" id="3.1.1.29"/>
    </reaction>
</comment>
<comment type="subunit">
    <text evidence="1">Monomer.</text>
</comment>
<comment type="subcellular location">
    <subcellularLocation>
        <location evidence="1">Cytoplasm</location>
    </subcellularLocation>
</comment>
<comment type="similarity">
    <text evidence="1">Belongs to the PTH family.</text>
</comment>
<feature type="chain" id="PRO_1000010651" description="Peptidyl-tRNA hydrolase">
    <location>
        <begin position="1"/>
        <end position="195"/>
    </location>
</feature>
<feature type="active site" description="Proton acceptor" evidence="1">
    <location>
        <position position="22"/>
    </location>
</feature>
<feature type="binding site" evidence="1">
    <location>
        <position position="17"/>
    </location>
    <ligand>
        <name>tRNA</name>
        <dbReference type="ChEBI" id="CHEBI:17843"/>
    </ligand>
</feature>
<feature type="binding site" evidence="1">
    <location>
        <position position="68"/>
    </location>
    <ligand>
        <name>tRNA</name>
        <dbReference type="ChEBI" id="CHEBI:17843"/>
    </ligand>
</feature>
<feature type="binding site" evidence="1">
    <location>
        <position position="70"/>
    </location>
    <ligand>
        <name>tRNA</name>
        <dbReference type="ChEBI" id="CHEBI:17843"/>
    </ligand>
</feature>
<feature type="binding site" evidence="1">
    <location>
        <position position="116"/>
    </location>
    <ligand>
        <name>tRNA</name>
        <dbReference type="ChEBI" id="CHEBI:17843"/>
    </ligand>
</feature>
<feature type="site" description="Discriminates between blocked and unblocked aminoacyl-tRNA" evidence="1">
    <location>
        <position position="12"/>
    </location>
</feature>
<feature type="site" description="Stabilizes the basic form of H active site to accept a proton" evidence="1">
    <location>
        <position position="95"/>
    </location>
</feature>
<organism>
    <name type="scientific">Shewanella sp. (strain ANA-3)</name>
    <dbReference type="NCBI Taxonomy" id="94122"/>
    <lineage>
        <taxon>Bacteria</taxon>
        <taxon>Pseudomonadati</taxon>
        <taxon>Pseudomonadota</taxon>
        <taxon>Gammaproteobacteria</taxon>
        <taxon>Alteromonadales</taxon>
        <taxon>Shewanellaceae</taxon>
        <taxon>Shewanella</taxon>
    </lineage>
</organism>
<accession>A0KTX7</accession>
<reference key="1">
    <citation type="submission" date="2006-09" db="EMBL/GenBank/DDBJ databases">
        <title>Complete sequence of chromosome 1 of Shewanella sp. ANA-3.</title>
        <authorList>
            <person name="Copeland A."/>
            <person name="Lucas S."/>
            <person name="Lapidus A."/>
            <person name="Barry K."/>
            <person name="Detter J.C."/>
            <person name="Glavina del Rio T."/>
            <person name="Hammon N."/>
            <person name="Israni S."/>
            <person name="Dalin E."/>
            <person name="Tice H."/>
            <person name="Pitluck S."/>
            <person name="Chertkov O."/>
            <person name="Brettin T."/>
            <person name="Bruce D."/>
            <person name="Han C."/>
            <person name="Tapia R."/>
            <person name="Gilna P."/>
            <person name="Schmutz J."/>
            <person name="Larimer F."/>
            <person name="Land M."/>
            <person name="Hauser L."/>
            <person name="Kyrpides N."/>
            <person name="Kim E."/>
            <person name="Newman D."/>
            <person name="Salticov C."/>
            <person name="Konstantinidis K."/>
            <person name="Klappenback J."/>
            <person name="Tiedje J."/>
            <person name="Richardson P."/>
        </authorList>
    </citation>
    <scope>NUCLEOTIDE SEQUENCE [LARGE SCALE GENOMIC DNA]</scope>
    <source>
        <strain>ANA-3</strain>
    </source>
</reference>